<protein>
    <recommendedName>
        <fullName evidence="1">Aspartate/glutamate leucyltransferase</fullName>
        <ecNumber evidence="1">2.3.2.29</ecNumber>
    </recommendedName>
</protein>
<proteinExistence type="inferred from homology"/>
<comment type="function">
    <text evidence="1">Functions in the N-end rule pathway of protein degradation where it conjugates Leu from its aminoacyl-tRNA to the N-termini of proteins containing an N-terminal aspartate or glutamate.</text>
</comment>
<comment type="catalytic activity">
    <reaction evidence="1">
        <text>N-terminal L-glutamyl-[protein] + L-leucyl-tRNA(Leu) = N-terminal L-leucyl-L-glutamyl-[protein] + tRNA(Leu) + H(+)</text>
        <dbReference type="Rhea" id="RHEA:50412"/>
        <dbReference type="Rhea" id="RHEA-COMP:9613"/>
        <dbReference type="Rhea" id="RHEA-COMP:9622"/>
        <dbReference type="Rhea" id="RHEA-COMP:12664"/>
        <dbReference type="Rhea" id="RHEA-COMP:12668"/>
        <dbReference type="ChEBI" id="CHEBI:15378"/>
        <dbReference type="ChEBI" id="CHEBI:64721"/>
        <dbReference type="ChEBI" id="CHEBI:78442"/>
        <dbReference type="ChEBI" id="CHEBI:78494"/>
        <dbReference type="ChEBI" id="CHEBI:133041"/>
        <dbReference type="EC" id="2.3.2.29"/>
    </reaction>
</comment>
<comment type="catalytic activity">
    <reaction evidence="1">
        <text>N-terminal L-aspartyl-[protein] + L-leucyl-tRNA(Leu) = N-terminal L-leucyl-L-aspartyl-[protein] + tRNA(Leu) + H(+)</text>
        <dbReference type="Rhea" id="RHEA:50420"/>
        <dbReference type="Rhea" id="RHEA-COMP:9613"/>
        <dbReference type="Rhea" id="RHEA-COMP:9622"/>
        <dbReference type="Rhea" id="RHEA-COMP:12669"/>
        <dbReference type="Rhea" id="RHEA-COMP:12674"/>
        <dbReference type="ChEBI" id="CHEBI:15378"/>
        <dbReference type="ChEBI" id="CHEBI:64720"/>
        <dbReference type="ChEBI" id="CHEBI:78442"/>
        <dbReference type="ChEBI" id="CHEBI:78494"/>
        <dbReference type="ChEBI" id="CHEBI:133042"/>
        <dbReference type="EC" id="2.3.2.29"/>
    </reaction>
</comment>
<comment type="subcellular location">
    <subcellularLocation>
        <location evidence="1">Cytoplasm</location>
    </subcellularLocation>
</comment>
<comment type="similarity">
    <text evidence="1">Belongs to the R-transferase family. Bpt subfamily.</text>
</comment>
<keyword id="KW-0012">Acyltransferase</keyword>
<keyword id="KW-0963">Cytoplasm</keyword>
<keyword id="KW-0808">Transferase</keyword>
<name>BPT_METPB</name>
<sequence length="248" mass="28018">MTSHPRDTPQFYLTAPSPCPYLPGQEERKVFTHLVGRRARDLNEILTQGGFRRSQTIAYRPACETCRACVSVRVVVEDFAITGSQRRILQRNAGLIGTPEPNRPASEQYALFRRYLDARHGDGGMVDMTVLDYAMMIEDSHVDTHLVVYRERGPDSAIHGRGVGAPVAVCLTDVLADGLSMVYSFYDPEAASRSLGTYMILDHIQRARALGLPYLYLGYWVDGSRKMDYKAKFKPQERLMPQGWVRVE</sequence>
<gene>
    <name evidence="1" type="primary">bpt</name>
    <name type="ordered locus">Mpop_4761</name>
</gene>
<accession>B1ZJU3</accession>
<feature type="chain" id="PRO_1000131985" description="Aspartate/glutamate leucyltransferase">
    <location>
        <begin position="1"/>
        <end position="248"/>
    </location>
</feature>
<evidence type="ECO:0000255" key="1">
    <source>
        <dbReference type="HAMAP-Rule" id="MF_00689"/>
    </source>
</evidence>
<reference key="1">
    <citation type="submission" date="2008-04" db="EMBL/GenBank/DDBJ databases">
        <title>Complete sequence of chromosome of Methylobacterium populi BJ001.</title>
        <authorList>
            <consortium name="US DOE Joint Genome Institute"/>
            <person name="Copeland A."/>
            <person name="Lucas S."/>
            <person name="Lapidus A."/>
            <person name="Glavina del Rio T."/>
            <person name="Dalin E."/>
            <person name="Tice H."/>
            <person name="Bruce D."/>
            <person name="Goodwin L."/>
            <person name="Pitluck S."/>
            <person name="Chertkov O."/>
            <person name="Brettin T."/>
            <person name="Detter J.C."/>
            <person name="Han C."/>
            <person name="Kuske C.R."/>
            <person name="Schmutz J."/>
            <person name="Larimer F."/>
            <person name="Land M."/>
            <person name="Hauser L."/>
            <person name="Kyrpides N."/>
            <person name="Mikhailova N."/>
            <person name="Marx C."/>
            <person name="Richardson P."/>
        </authorList>
    </citation>
    <scope>NUCLEOTIDE SEQUENCE [LARGE SCALE GENOMIC DNA]</scope>
    <source>
        <strain>ATCC BAA-705 / NCIMB 13946 / BJ001</strain>
    </source>
</reference>
<dbReference type="EC" id="2.3.2.29" evidence="1"/>
<dbReference type="EMBL" id="CP001029">
    <property type="protein sequence ID" value="ACB82857.1"/>
    <property type="molecule type" value="Genomic_DNA"/>
</dbReference>
<dbReference type="RefSeq" id="WP_012456455.1">
    <property type="nucleotide sequence ID" value="NC_010725.1"/>
</dbReference>
<dbReference type="SMR" id="B1ZJU3"/>
<dbReference type="STRING" id="441620.Mpop_4761"/>
<dbReference type="KEGG" id="mpo:Mpop_4761"/>
<dbReference type="eggNOG" id="COG2935">
    <property type="taxonomic scope" value="Bacteria"/>
</dbReference>
<dbReference type="HOGENOM" id="CLU_077607_1_0_5"/>
<dbReference type="OrthoDB" id="9782022at2"/>
<dbReference type="Proteomes" id="UP000007136">
    <property type="component" value="Chromosome"/>
</dbReference>
<dbReference type="GO" id="GO:0005737">
    <property type="term" value="C:cytoplasm"/>
    <property type="evidence" value="ECO:0007669"/>
    <property type="project" value="UniProtKB-SubCell"/>
</dbReference>
<dbReference type="GO" id="GO:0004057">
    <property type="term" value="F:arginyl-tRNA--protein transferase activity"/>
    <property type="evidence" value="ECO:0007669"/>
    <property type="project" value="InterPro"/>
</dbReference>
<dbReference type="GO" id="GO:0008914">
    <property type="term" value="F:leucyl-tRNA--protein transferase activity"/>
    <property type="evidence" value="ECO:0007669"/>
    <property type="project" value="UniProtKB-UniRule"/>
</dbReference>
<dbReference type="GO" id="GO:0071596">
    <property type="term" value="P:ubiquitin-dependent protein catabolic process via the N-end rule pathway"/>
    <property type="evidence" value="ECO:0007669"/>
    <property type="project" value="InterPro"/>
</dbReference>
<dbReference type="HAMAP" id="MF_00689">
    <property type="entry name" value="Bpt"/>
    <property type="match status" value="1"/>
</dbReference>
<dbReference type="InterPro" id="IPR016181">
    <property type="entry name" value="Acyl_CoA_acyltransferase"/>
</dbReference>
<dbReference type="InterPro" id="IPR017138">
    <property type="entry name" value="Asp_Glu_LeuTrfase"/>
</dbReference>
<dbReference type="InterPro" id="IPR030700">
    <property type="entry name" value="N-end_Aminoacyl_Trfase"/>
</dbReference>
<dbReference type="InterPro" id="IPR007472">
    <property type="entry name" value="N-end_Aminoacyl_Trfase_C"/>
</dbReference>
<dbReference type="InterPro" id="IPR007471">
    <property type="entry name" value="N-end_Aminoacyl_Trfase_N"/>
</dbReference>
<dbReference type="NCBIfam" id="NF002342">
    <property type="entry name" value="PRK01305.1-3"/>
    <property type="match status" value="1"/>
</dbReference>
<dbReference type="NCBIfam" id="NF002343">
    <property type="entry name" value="PRK01305.1-4"/>
    <property type="match status" value="1"/>
</dbReference>
<dbReference type="NCBIfam" id="NF002346">
    <property type="entry name" value="PRK01305.2-3"/>
    <property type="match status" value="1"/>
</dbReference>
<dbReference type="PANTHER" id="PTHR21367">
    <property type="entry name" value="ARGININE-TRNA-PROTEIN TRANSFERASE 1"/>
    <property type="match status" value="1"/>
</dbReference>
<dbReference type="PANTHER" id="PTHR21367:SF1">
    <property type="entry name" value="ARGINYL-TRNA--PROTEIN TRANSFERASE 1"/>
    <property type="match status" value="1"/>
</dbReference>
<dbReference type="Pfam" id="PF04377">
    <property type="entry name" value="ATE_C"/>
    <property type="match status" value="1"/>
</dbReference>
<dbReference type="Pfam" id="PF04376">
    <property type="entry name" value="ATE_N"/>
    <property type="match status" value="1"/>
</dbReference>
<dbReference type="PIRSF" id="PIRSF037208">
    <property type="entry name" value="ATE_pro_prd"/>
    <property type="match status" value="1"/>
</dbReference>
<dbReference type="SUPFAM" id="SSF55729">
    <property type="entry name" value="Acyl-CoA N-acyltransferases (Nat)"/>
    <property type="match status" value="1"/>
</dbReference>
<organism>
    <name type="scientific">Methylorubrum populi (strain ATCC BAA-705 / NCIMB 13946 / BJ001)</name>
    <name type="common">Methylobacterium populi</name>
    <dbReference type="NCBI Taxonomy" id="441620"/>
    <lineage>
        <taxon>Bacteria</taxon>
        <taxon>Pseudomonadati</taxon>
        <taxon>Pseudomonadota</taxon>
        <taxon>Alphaproteobacteria</taxon>
        <taxon>Hyphomicrobiales</taxon>
        <taxon>Methylobacteriaceae</taxon>
        <taxon>Methylorubrum</taxon>
    </lineage>
</organism>